<geneLocation type="chloroplast"/>
<dbReference type="EMBL" id="AP007055">
    <property type="protein sequence ID" value="BAE02601.1"/>
    <property type="molecule type" value="Genomic_DNA"/>
</dbReference>
<dbReference type="EMBL" id="AP007057">
    <property type="protein sequence ID" value="BAE02603.1"/>
    <property type="molecule type" value="Genomic_DNA"/>
</dbReference>
<dbReference type="RefSeq" id="YP_010721442.1">
    <property type="nucleotide sequence ID" value="NC_072525.1"/>
</dbReference>
<dbReference type="SMR" id="Q4QYT1"/>
<dbReference type="GeneID" id="79491253"/>
<dbReference type="GO" id="GO:0009535">
    <property type="term" value="C:chloroplast thylakoid membrane"/>
    <property type="evidence" value="ECO:0007669"/>
    <property type="project" value="UniProtKB-SubCell"/>
</dbReference>
<dbReference type="GO" id="GO:0009512">
    <property type="term" value="C:cytochrome b6f complex"/>
    <property type="evidence" value="ECO:0007669"/>
    <property type="project" value="InterPro"/>
</dbReference>
<dbReference type="GO" id="GO:0045158">
    <property type="term" value="F:electron transporter, transferring electrons within cytochrome b6/f complex of photosystem II activity"/>
    <property type="evidence" value="ECO:0007669"/>
    <property type="project" value="UniProtKB-UniRule"/>
</dbReference>
<dbReference type="GO" id="GO:0015979">
    <property type="term" value="P:photosynthesis"/>
    <property type="evidence" value="ECO:0007669"/>
    <property type="project" value="UniProtKB-KW"/>
</dbReference>
<dbReference type="HAMAP" id="MF_00433">
    <property type="entry name" value="Cytb6_f_PetL"/>
    <property type="match status" value="1"/>
</dbReference>
<dbReference type="InterPro" id="IPR007802">
    <property type="entry name" value="Cyt_b6/f_cplx_su6"/>
</dbReference>
<dbReference type="PANTHER" id="PTHR37266">
    <property type="entry name" value="CYTOCHROME B6-F COMPLEX SUBUNIT 6"/>
    <property type="match status" value="1"/>
</dbReference>
<dbReference type="PANTHER" id="PTHR37266:SF1">
    <property type="entry name" value="CYTOCHROME B6-F COMPLEX SUBUNIT 6"/>
    <property type="match status" value="1"/>
</dbReference>
<dbReference type="Pfam" id="PF05115">
    <property type="entry name" value="PetL"/>
    <property type="match status" value="1"/>
</dbReference>
<dbReference type="SUPFAM" id="SSF103436">
    <property type="entry name" value="PetL subunit of the cytochrome b6f complex"/>
    <property type="match status" value="1"/>
</dbReference>
<name>PETL_SACSI</name>
<proteinExistence type="inferred from homology"/>
<protein>
    <recommendedName>
        <fullName evidence="1">Cytochrome b6-f complex subunit 6</fullName>
    </recommendedName>
    <alternativeName>
        <fullName evidence="1">Cytochrome b6-f complex subunit PetL</fullName>
    </alternativeName>
    <alternativeName>
        <fullName evidence="1">Cytochrome b6-f complex subunit VI</fullName>
    </alternativeName>
</protein>
<comment type="function">
    <text evidence="1">Component of the cytochrome b6-f complex, which mediates electron transfer between photosystem II (PSII) and photosystem I (PSI), cyclic electron flow around PSI, and state transitions. PetL is important for photoautotrophic growth as well as for electron transfer efficiency and stability of the cytochrome b6-f complex.</text>
</comment>
<comment type="subunit">
    <text evidence="1">The 4 large subunits of the cytochrome b6-f complex are cytochrome b6, subunit IV (17 kDa polypeptide, PetD), cytochrome f and the Rieske protein, while the 4 small subunits are PetG, PetL, PetM and PetN. The complex functions as a dimer.</text>
</comment>
<comment type="subcellular location">
    <subcellularLocation>
        <location evidence="1">Plastid</location>
        <location evidence="1">Chloroplast thylakoid membrane</location>
        <topology evidence="1">Single-pass membrane protein</topology>
    </subcellularLocation>
</comment>
<comment type="similarity">
    <text evidence="1">Belongs to the PetL family.</text>
</comment>
<feature type="chain" id="PRO_0000220479" description="Cytochrome b6-f complex subunit 6">
    <location>
        <begin position="1"/>
        <end position="31"/>
    </location>
</feature>
<feature type="transmembrane region" description="Helical" evidence="1">
    <location>
        <begin position="4"/>
        <end position="24"/>
    </location>
</feature>
<accession>Q4QYT1</accession>
<sequence length="31" mass="3426">MLTITSYFGFLLAALTITPALFIGLNKIRLI</sequence>
<gene>
    <name evidence="1" type="primary">petL</name>
</gene>
<evidence type="ECO:0000255" key="1">
    <source>
        <dbReference type="HAMAP-Rule" id="MF_00433"/>
    </source>
</evidence>
<keyword id="KW-0150">Chloroplast</keyword>
<keyword id="KW-0249">Electron transport</keyword>
<keyword id="KW-0472">Membrane</keyword>
<keyword id="KW-0602">Photosynthesis</keyword>
<keyword id="KW-0934">Plastid</keyword>
<keyword id="KW-0793">Thylakoid</keyword>
<keyword id="KW-0812">Transmembrane</keyword>
<keyword id="KW-1133">Transmembrane helix</keyword>
<keyword id="KW-0813">Transport</keyword>
<organism>
    <name type="scientific">Saccharum sinense</name>
    <name type="common">Chinese sugarcane</name>
    <dbReference type="NCBI Taxonomy" id="154766"/>
    <lineage>
        <taxon>Eukaryota</taxon>
        <taxon>Viridiplantae</taxon>
        <taxon>Streptophyta</taxon>
        <taxon>Embryophyta</taxon>
        <taxon>Tracheophyta</taxon>
        <taxon>Spermatophyta</taxon>
        <taxon>Magnoliopsida</taxon>
        <taxon>Liliopsida</taxon>
        <taxon>Poales</taxon>
        <taxon>Poaceae</taxon>
        <taxon>PACMAD clade</taxon>
        <taxon>Panicoideae</taxon>
        <taxon>Andropogonodae</taxon>
        <taxon>Andropogoneae</taxon>
        <taxon>Saccharinae</taxon>
        <taxon>Saccharum</taxon>
        <taxon>Saccharum officinarum species complex</taxon>
    </lineage>
</organism>
<reference key="1">
    <citation type="journal article" date="2005" name="Theor. Appl. Genet.">
        <title>Very close relationship of the chloroplast genomes among Saccharum species.</title>
        <authorList>
            <person name="Takahashi S."/>
            <person name="Furukawa T."/>
            <person name="Asano T."/>
            <person name="Terajima Y."/>
            <person name="Shimada H."/>
            <person name="Sugimoto A."/>
            <person name="Kadowaki K."/>
        </authorList>
    </citation>
    <scope>NUCLEOTIDE SEQUENCE [GENOMIC DNA]</scope>
    <source>
        <strain>cv. Ooshima</strain>
        <strain>cv. Tekcha</strain>
    </source>
</reference>